<evidence type="ECO:0000255" key="1">
    <source>
        <dbReference type="HAMAP-Rule" id="MF_00141"/>
    </source>
</evidence>
<proteinExistence type="inferred from homology"/>
<gene>
    <name evidence="1" type="primary">efp</name>
    <name type="ordered locus">RSKD131_1812</name>
</gene>
<accession>B9KKM5</accession>
<dbReference type="EMBL" id="CP001150">
    <property type="protein sequence ID" value="ACM01672.1"/>
    <property type="molecule type" value="Genomic_DNA"/>
</dbReference>
<dbReference type="RefSeq" id="WP_002720643.1">
    <property type="nucleotide sequence ID" value="NC_011963.1"/>
</dbReference>
<dbReference type="SMR" id="B9KKM5"/>
<dbReference type="GeneID" id="67447211"/>
<dbReference type="KEGG" id="rsk:RSKD131_1812"/>
<dbReference type="HOGENOM" id="CLU_074944_1_1_5"/>
<dbReference type="UniPathway" id="UPA00345"/>
<dbReference type="GO" id="GO:0005737">
    <property type="term" value="C:cytoplasm"/>
    <property type="evidence" value="ECO:0007669"/>
    <property type="project" value="UniProtKB-SubCell"/>
</dbReference>
<dbReference type="GO" id="GO:0003746">
    <property type="term" value="F:translation elongation factor activity"/>
    <property type="evidence" value="ECO:0007669"/>
    <property type="project" value="UniProtKB-UniRule"/>
</dbReference>
<dbReference type="GO" id="GO:0043043">
    <property type="term" value="P:peptide biosynthetic process"/>
    <property type="evidence" value="ECO:0007669"/>
    <property type="project" value="InterPro"/>
</dbReference>
<dbReference type="CDD" id="cd04470">
    <property type="entry name" value="S1_EF-P_repeat_1"/>
    <property type="match status" value="1"/>
</dbReference>
<dbReference type="CDD" id="cd05794">
    <property type="entry name" value="S1_EF-P_repeat_2"/>
    <property type="match status" value="1"/>
</dbReference>
<dbReference type="FunFam" id="2.40.50.140:FF:000004">
    <property type="entry name" value="Elongation factor P"/>
    <property type="match status" value="1"/>
</dbReference>
<dbReference type="FunFam" id="2.40.50.140:FF:000009">
    <property type="entry name" value="Elongation factor P"/>
    <property type="match status" value="1"/>
</dbReference>
<dbReference type="Gene3D" id="2.30.30.30">
    <property type="match status" value="1"/>
</dbReference>
<dbReference type="Gene3D" id="2.40.50.140">
    <property type="entry name" value="Nucleic acid-binding proteins"/>
    <property type="match status" value="2"/>
</dbReference>
<dbReference type="HAMAP" id="MF_00141">
    <property type="entry name" value="EF_P"/>
    <property type="match status" value="1"/>
</dbReference>
<dbReference type="InterPro" id="IPR015365">
    <property type="entry name" value="Elong-fact-P_C"/>
</dbReference>
<dbReference type="InterPro" id="IPR012340">
    <property type="entry name" value="NA-bd_OB-fold"/>
</dbReference>
<dbReference type="InterPro" id="IPR014722">
    <property type="entry name" value="Rib_uL2_dom2"/>
</dbReference>
<dbReference type="InterPro" id="IPR020599">
    <property type="entry name" value="Transl_elong_fac_P/YeiP"/>
</dbReference>
<dbReference type="InterPro" id="IPR013185">
    <property type="entry name" value="Transl_elong_KOW-like"/>
</dbReference>
<dbReference type="InterPro" id="IPR001059">
    <property type="entry name" value="Transl_elong_P/YeiP_cen"/>
</dbReference>
<dbReference type="InterPro" id="IPR013852">
    <property type="entry name" value="Transl_elong_P/YeiP_CS"/>
</dbReference>
<dbReference type="InterPro" id="IPR011768">
    <property type="entry name" value="Transl_elongation_fac_P"/>
</dbReference>
<dbReference type="InterPro" id="IPR008991">
    <property type="entry name" value="Translation_prot_SH3-like_sf"/>
</dbReference>
<dbReference type="NCBIfam" id="TIGR00038">
    <property type="entry name" value="efp"/>
    <property type="match status" value="1"/>
</dbReference>
<dbReference type="NCBIfam" id="NF001810">
    <property type="entry name" value="PRK00529.1"/>
    <property type="match status" value="1"/>
</dbReference>
<dbReference type="PANTHER" id="PTHR30053">
    <property type="entry name" value="ELONGATION FACTOR P"/>
    <property type="match status" value="1"/>
</dbReference>
<dbReference type="PANTHER" id="PTHR30053:SF14">
    <property type="entry name" value="TRANSLATION ELONGATION FACTOR KOW-LIKE DOMAIN-CONTAINING PROTEIN"/>
    <property type="match status" value="1"/>
</dbReference>
<dbReference type="Pfam" id="PF01132">
    <property type="entry name" value="EFP"/>
    <property type="match status" value="1"/>
</dbReference>
<dbReference type="Pfam" id="PF08207">
    <property type="entry name" value="EFP_N"/>
    <property type="match status" value="1"/>
</dbReference>
<dbReference type="Pfam" id="PF09285">
    <property type="entry name" value="Elong-fact-P_C"/>
    <property type="match status" value="1"/>
</dbReference>
<dbReference type="PIRSF" id="PIRSF005901">
    <property type="entry name" value="EF-P"/>
    <property type="match status" value="1"/>
</dbReference>
<dbReference type="SMART" id="SM01185">
    <property type="entry name" value="EFP"/>
    <property type="match status" value="1"/>
</dbReference>
<dbReference type="SMART" id="SM00841">
    <property type="entry name" value="Elong-fact-P_C"/>
    <property type="match status" value="1"/>
</dbReference>
<dbReference type="SUPFAM" id="SSF50249">
    <property type="entry name" value="Nucleic acid-binding proteins"/>
    <property type="match status" value="2"/>
</dbReference>
<dbReference type="SUPFAM" id="SSF50104">
    <property type="entry name" value="Translation proteins SH3-like domain"/>
    <property type="match status" value="1"/>
</dbReference>
<dbReference type="PROSITE" id="PS01275">
    <property type="entry name" value="EFP"/>
    <property type="match status" value="1"/>
</dbReference>
<sequence>MKVIASSLRKGNVVDIDGRLYVVLTAQNFHPGKGTPVTQVDMRRISDGTKVSERWKTTEQVERATVDEREYDFLYEDGEGYHFMEPVSYDQVVVSPDVVGDGKVFLTEGMRVYLQTHNDVAISIEFPQKVTVEITETEPVVKGQTASSSYKPAMCTNGLRVMVPPHISAGTRIVINTEDLSYVERAKD</sequence>
<organism>
    <name type="scientific">Cereibacter sphaeroides (strain KD131 / KCTC 12085)</name>
    <name type="common">Rhodobacter sphaeroides</name>
    <dbReference type="NCBI Taxonomy" id="557760"/>
    <lineage>
        <taxon>Bacteria</taxon>
        <taxon>Pseudomonadati</taxon>
        <taxon>Pseudomonadota</taxon>
        <taxon>Alphaproteobacteria</taxon>
        <taxon>Rhodobacterales</taxon>
        <taxon>Paracoccaceae</taxon>
        <taxon>Cereibacter</taxon>
    </lineage>
</organism>
<protein>
    <recommendedName>
        <fullName evidence="1">Elongation factor P</fullName>
        <shortName evidence="1">EF-P</shortName>
    </recommendedName>
</protein>
<reference key="1">
    <citation type="journal article" date="2009" name="J. Bacteriol.">
        <title>Complete genome sequence of Rhodobacter sphaeroides KD131.</title>
        <authorList>
            <person name="Lim S.-K."/>
            <person name="Kim S.J."/>
            <person name="Cha S.H."/>
            <person name="Oh Y.-K."/>
            <person name="Rhee H.-J."/>
            <person name="Kim M.-S."/>
            <person name="Lee J.K."/>
        </authorList>
    </citation>
    <scope>NUCLEOTIDE SEQUENCE [LARGE SCALE GENOMIC DNA]</scope>
    <source>
        <strain>KD131 / KCTC 12085</strain>
    </source>
</reference>
<comment type="function">
    <text evidence="1">Involved in peptide bond synthesis. Stimulates efficient translation and peptide-bond synthesis on native or reconstituted 70S ribosomes in vitro. Probably functions indirectly by altering the affinity of the ribosome for aminoacyl-tRNA, thus increasing their reactivity as acceptors for peptidyl transferase.</text>
</comment>
<comment type="pathway">
    <text evidence="1">Protein biosynthesis; polypeptide chain elongation.</text>
</comment>
<comment type="subcellular location">
    <subcellularLocation>
        <location evidence="1">Cytoplasm</location>
    </subcellularLocation>
</comment>
<comment type="similarity">
    <text evidence="1">Belongs to the elongation factor P family.</text>
</comment>
<keyword id="KW-0963">Cytoplasm</keyword>
<keyword id="KW-0251">Elongation factor</keyword>
<keyword id="KW-0648">Protein biosynthesis</keyword>
<feature type="chain" id="PRO_1000123024" description="Elongation factor P">
    <location>
        <begin position="1"/>
        <end position="188"/>
    </location>
</feature>
<name>EFP_CERSK</name>